<comment type="function">
    <text evidence="1">Plays a role in virus cell tropism, and may be required for efficient virus replication in macrophages.</text>
</comment>
<comment type="subcellular location">
    <subcellularLocation>
        <location evidence="2">Host endoplasmic reticulum lumen</location>
    </subcellularLocation>
</comment>
<comment type="induction">
    <text evidence="5">Expressed in the early phase of the viral replicative cycle.</text>
</comment>
<comment type="PTM">
    <text evidence="2">N-glycosylated.</text>
</comment>
<comment type="similarity">
    <text evidence="5">Belongs to the asfivirus MGF 110 family.</text>
</comment>
<dbReference type="EMBL" id="AY261360">
    <property type="status" value="NOT_ANNOTATED_CDS"/>
    <property type="molecule type" value="Genomic_DNA"/>
</dbReference>
<dbReference type="Proteomes" id="UP000000861">
    <property type="component" value="Segment"/>
</dbReference>
<dbReference type="GO" id="GO:0044166">
    <property type="term" value="C:host cell endoplasmic reticulum lumen"/>
    <property type="evidence" value="ECO:0007669"/>
    <property type="project" value="UniProtKB-SubCell"/>
</dbReference>
<dbReference type="InterPro" id="IPR004848">
    <property type="entry name" value="ASFV_fam_110"/>
</dbReference>
<dbReference type="Pfam" id="PF01639">
    <property type="entry name" value="v110"/>
    <property type="match status" value="1"/>
</dbReference>
<dbReference type="PROSITE" id="PS00014">
    <property type="entry name" value="ER_TARGET"/>
    <property type="match status" value="1"/>
</dbReference>
<name>1106L_ASFK5</name>
<evidence type="ECO:0000250" key="1"/>
<evidence type="ECO:0000250" key="2">
    <source>
        <dbReference type="UniProtKB" id="P68744"/>
    </source>
</evidence>
<evidence type="ECO:0000255" key="3"/>
<evidence type="ECO:0000255" key="4">
    <source>
        <dbReference type="PROSITE-ProRule" id="PRU10138"/>
    </source>
</evidence>
<evidence type="ECO:0000305" key="5"/>
<organismHost>
    <name type="scientific">Ornithodoros</name>
    <name type="common">relapsing fever ticks</name>
    <dbReference type="NCBI Taxonomy" id="6937"/>
</organismHost>
<organismHost>
    <name type="scientific">Phacochoerus aethiopicus</name>
    <name type="common">Warthog</name>
    <dbReference type="NCBI Taxonomy" id="85517"/>
</organismHost>
<organismHost>
    <name type="scientific">Phacochoerus africanus</name>
    <name type="common">Warthog</name>
    <dbReference type="NCBI Taxonomy" id="41426"/>
</organismHost>
<organismHost>
    <name type="scientific">Potamochoerus larvatus</name>
    <name type="common">Bushpig</name>
    <dbReference type="NCBI Taxonomy" id="273792"/>
</organismHost>
<organismHost>
    <name type="scientific">Sus scrofa</name>
    <name type="common">Pig</name>
    <dbReference type="NCBI Taxonomy" id="9823"/>
</organismHost>
<reference key="1">
    <citation type="submission" date="2003-03" db="EMBL/GenBank/DDBJ databases">
        <title>African swine fever virus genomes.</title>
        <authorList>
            <person name="Kutish G.F."/>
            <person name="Rock D.L."/>
        </authorList>
    </citation>
    <scope>NUCLEOTIDE SEQUENCE [LARGE SCALE GENOMIC DNA]</scope>
</reference>
<accession>P0C9H8</accession>
<keyword id="KW-0244">Early protein</keyword>
<keyword id="KW-0325">Glycoprotein</keyword>
<keyword id="KW-1038">Host endoplasmic reticulum</keyword>
<keyword id="KW-0732">Signal</keyword>
<protein>
    <recommendedName>
        <fullName>Protein MGF 110-6L</fullName>
    </recommendedName>
</protein>
<feature type="signal peptide" evidence="3">
    <location>
        <begin position="1"/>
        <end position="18"/>
    </location>
</feature>
<feature type="chain" id="PRO_0000373200" description="Protein MGF 110-6L">
    <location>
        <begin position="19"/>
        <end position="122"/>
    </location>
</feature>
<feature type="short sequence motif" description="Prevents secretion from ER" evidence="4">
    <location>
        <begin position="119"/>
        <end position="122"/>
    </location>
</feature>
<feature type="glycosylation site" description="N-linked (GlcNAc...) asparagine; by host" evidence="3">
    <location>
        <position position="100"/>
    </location>
</feature>
<proteinExistence type="inferred from homology"/>
<gene>
    <name type="ordered locus">Ken-013</name>
</gene>
<sequence length="122" mass="14367">MLVIFLGILGLMASQVLGLPSNQPTGQLRPTEDPPEEELEYWCAYMESCQFCWDCQDGNCINKIDGSVIYKNEFVRPCSVSRWMDKCMYDLNKGIYHTMNCSQPQSWNPYKYFRKEWKKDEL</sequence>
<organism>
    <name type="scientific">African swine fever virus (isolate Pig/Kenya/KEN-50/1950)</name>
    <name type="common">ASFV</name>
    <dbReference type="NCBI Taxonomy" id="561445"/>
    <lineage>
        <taxon>Viruses</taxon>
        <taxon>Varidnaviria</taxon>
        <taxon>Bamfordvirae</taxon>
        <taxon>Nucleocytoviricota</taxon>
        <taxon>Pokkesviricetes</taxon>
        <taxon>Asfuvirales</taxon>
        <taxon>Asfarviridae</taxon>
        <taxon>Asfivirus</taxon>
        <taxon>African swine fever virus</taxon>
    </lineage>
</organism>